<feature type="chain" id="PRO_1000007362" description="Large ribosomal subunit protein bL28">
    <location>
        <begin position="1"/>
        <end position="97"/>
    </location>
</feature>
<name>RL28_SPHAL</name>
<proteinExistence type="inferred from homology"/>
<evidence type="ECO:0000255" key="1">
    <source>
        <dbReference type="HAMAP-Rule" id="MF_00373"/>
    </source>
</evidence>
<evidence type="ECO:0000305" key="2"/>
<sequence length="97" mass="10645">MSRICELTGKGRQIGHNVSHANNKTKRTFLPNLQNVTLLSDALGKSVKLRVSTHGLRSVEHNGGLDNWLMKTGDDQLSANARKLKKEVAKKLAEKAA</sequence>
<gene>
    <name evidence="1" type="primary">rpmB</name>
    <name type="ordered locus">Sala_2750</name>
</gene>
<accession>Q1GPG7</accession>
<keyword id="KW-1185">Reference proteome</keyword>
<keyword id="KW-0687">Ribonucleoprotein</keyword>
<keyword id="KW-0689">Ribosomal protein</keyword>
<organism>
    <name type="scientific">Sphingopyxis alaskensis (strain DSM 13593 / LMG 18877 / RB2256)</name>
    <name type="common">Sphingomonas alaskensis</name>
    <dbReference type="NCBI Taxonomy" id="317655"/>
    <lineage>
        <taxon>Bacteria</taxon>
        <taxon>Pseudomonadati</taxon>
        <taxon>Pseudomonadota</taxon>
        <taxon>Alphaproteobacteria</taxon>
        <taxon>Sphingomonadales</taxon>
        <taxon>Sphingomonadaceae</taxon>
        <taxon>Sphingopyxis</taxon>
    </lineage>
</organism>
<dbReference type="EMBL" id="CP000356">
    <property type="protein sequence ID" value="ABF54455.1"/>
    <property type="molecule type" value="Genomic_DNA"/>
</dbReference>
<dbReference type="RefSeq" id="WP_011543020.1">
    <property type="nucleotide sequence ID" value="NC_008048.1"/>
</dbReference>
<dbReference type="SMR" id="Q1GPG7"/>
<dbReference type="STRING" id="317655.Sala_2750"/>
<dbReference type="KEGG" id="sal:Sala_2750"/>
<dbReference type="eggNOG" id="COG0227">
    <property type="taxonomic scope" value="Bacteria"/>
</dbReference>
<dbReference type="HOGENOM" id="CLU_064548_4_2_5"/>
<dbReference type="OrthoDB" id="9805609at2"/>
<dbReference type="Proteomes" id="UP000006578">
    <property type="component" value="Chromosome"/>
</dbReference>
<dbReference type="GO" id="GO:0022625">
    <property type="term" value="C:cytosolic large ribosomal subunit"/>
    <property type="evidence" value="ECO:0007669"/>
    <property type="project" value="TreeGrafter"/>
</dbReference>
<dbReference type="GO" id="GO:0003735">
    <property type="term" value="F:structural constituent of ribosome"/>
    <property type="evidence" value="ECO:0007669"/>
    <property type="project" value="InterPro"/>
</dbReference>
<dbReference type="GO" id="GO:0006412">
    <property type="term" value="P:translation"/>
    <property type="evidence" value="ECO:0007669"/>
    <property type="project" value="UniProtKB-UniRule"/>
</dbReference>
<dbReference type="Gene3D" id="2.30.170.40">
    <property type="entry name" value="Ribosomal protein L28/L24"/>
    <property type="match status" value="1"/>
</dbReference>
<dbReference type="HAMAP" id="MF_00373">
    <property type="entry name" value="Ribosomal_bL28"/>
    <property type="match status" value="1"/>
</dbReference>
<dbReference type="InterPro" id="IPR026569">
    <property type="entry name" value="Ribosomal_bL28"/>
</dbReference>
<dbReference type="InterPro" id="IPR034704">
    <property type="entry name" value="Ribosomal_bL28/bL31-like_sf"/>
</dbReference>
<dbReference type="InterPro" id="IPR001383">
    <property type="entry name" value="Ribosomal_bL28_bact-type"/>
</dbReference>
<dbReference type="InterPro" id="IPR037147">
    <property type="entry name" value="Ribosomal_bL28_sf"/>
</dbReference>
<dbReference type="NCBIfam" id="TIGR00009">
    <property type="entry name" value="L28"/>
    <property type="match status" value="1"/>
</dbReference>
<dbReference type="PANTHER" id="PTHR13528">
    <property type="entry name" value="39S RIBOSOMAL PROTEIN L28, MITOCHONDRIAL"/>
    <property type="match status" value="1"/>
</dbReference>
<dbReference type="PANTHER" id="PTHR13528:SF2">
    <property type="entry name" value="LARGE RIBOSOMAL SUBUNIT PROTEIN BL28M"/>
    <property type="match status" value="1"/>
</dbReference>
<dbReference type="Pfam" id="PF00830">
    <property type="entry name" value="Ribosomal_L28"/>
    <property type="match status" value="1"/>
</dbReference>
<dbReference type="SUPFAM" id="SSF143800">
    <property type="entry name" value="L28p-like"/>
    <property type="match status" value="1"/>
</dbReference>
<comment type="similarity">
    <text evidence="1">Belongs to the bacterial ribosomal protein bL28 family.</text>
</comment>
<protein>
    <recommendedName>
        <fullName evidence="1">Large ribosomal subunit protein bL28</fullName>
    </recommendedName>
    <alternativeName>
        <fullName evidence="2">50S ribosomal protein L28</fullName>
    </alternativeName>
</protein>
<reference key="1">
    <citation type="journal article" date="2009" name="Proc. Natl. Acad. Sci. U.S.A.">
        <title>The genomic basis of trophic strategy in marine bacteria.</title>
        <authorList>
            <person name="Lauro F.M."/>
            <person name="McDougald D."/>
            <person name="Thomas T."/>
            <person name="Williams T.J."/>
            <person name="Egan S."/>
            <person name="Rice S."/>
            <person name="DeMaere M.Z."/>
            <person name="Ting L."/>
            <person name="Ertan H."/>
            <person name="Johnson J."/>
            <person name="Ferriera S."/>
            <person name="Lapidus A."/>
            <person name="Anderson I."/>
            <person name="Kyrpides N."/>
            <person name="Munk A.C."/>
            <person name="Detter C."/>
            <person name="Han C.S."/>
            <person name="Brown M.V."/>
            <person name="Robb F.T."/>
            <person name="Kjelleberg S."/>
            <person name="Cavicchioli R."/>
        </authorList>
    </citation>
    <scope>NUCLEOTIDE SEQUENCE [LARGE SCALE GENOMIC DNA]</scope>
    <source>
        <strain>DSM 13593 / LMG 18877 / RB2256</strain>
    </source>
</reference>